<comment type="function">
    <text evidence="1">Required for growth and/or survival at acidic conditions.</text>
</comment>
<comment type="subcellular location">
    <subcellularLocation>
        <location evidence="1">Periplasm</location>
    </subcellularLocation>
</comment>
<comment type="PTM">
    <text evidence="1">Proteolytic processing gives rise to the active protein.</text>
</comment>
<comment type="similarity">
    <text evidence="1">Belongs to the Asr family.</text>
</comment>
<name>ASR_ECOL6</name>
<keyword id="KW-0574">Periplasm</keyword>
<keyword id="KW-1185">Reference proteome</keyword>
<keyword id="KW-0732">Signal</keyword>
<gene>
    <name evidence="1" type="primary">asr</name>
    <name type="ordered locus">c1988</name>
</gene>
<organism>
    <name type="scientific">Escherichia coli O6:H1 (strain CFT073 / ATCC 700928 / UPEC)</name>
    <dbReference type="NCBI Taxonomy" id="199310"/>
    <lineage>
        <taxon>Bacteria</taxon>
        <taxon>Pseudomonadati</taxon>
        <taxon>Pseudomonadota</taxon>
        <taxon>Gammaproteobacteria</taxon>
        <taxon>Enterobacterales</taxon>
        <taxon>Enterobacteriaceae</taxon>
        <taxon>Escherichia</taxon>
    </lineage>
</organism>
<feature type="signal peptide" evidence="1">
    <location>
        <begin position="1"/>
        <end position="21"/>
    </location>
</feature>
<feature type="propeptide" id="PRO_0000269504" evidence="1">
    <location>
        <begin position="22"/>
        <end position="58"/>
    </location>
</feature>
<feature type="chain" id="PRO_0000002403" description="Acid shock protein">
    <location>
        <begin position="59"/>
        <end position="102"/>
    </location>
</feature>
<feature type="region of interest" description="Disordered" evidence="2">
    <location>
        <begin position="22"/>
        <end position="102"/>
    </location>
</feature>
<feature type="compositionally biased region" description="Low complexity" evidence="2">
    <location>
        <begin position="22"/>
        <end position="41"/>
    </location>
</feature>
<feature type="compositionally biased region" description="Basic residues" evidence="2">
    <location>
        <begin position="80"/>
        <end position="90"/>
    </location>
</feature>
<feature type="compositionally biased region" description="Low complexity" evidence="2">
    <location>
        <begin position="91"/>
        <end position="102"/>
    </location>
</feature>
<accession>Q8CW15</accession>
<evidence type="ECO:0000255" key="1">
    <source>
        <dbReference type="HAMAP-Rule" id="MF_00546"/>
    </source>
</evidence>
<evidence type="ECO:0000256" key="2">
    <source>
        <dbReference type="SAM" id="MobiDB-lite"/>
    </source>
</evidence>
<protein>
    <recommendedName>
        <fullName evidence="1">Acid shock protein</fullName>
    </recommendedName>
</protein>
<proteinExistence type="inferred from homology"/>
<reference key="1">
    <citation type="journal article" date="2002" name="Proc. Natl. Acad. Sci. U.S.A.">
        <title>Extensive mosaic structure revealed by the complete genome sequence of uropathogenic Escherichia coli.</title>
        <authorList>
            <person name="Welch R.A."/>
            <person name="Burland V."/>
            <person name="Plunkett G. III"/>
            <person name="Redford P."/>
            <person name="Roesch P."/>
            <person name="Rasko D."/>
            <person name="Buckles E.L."/>
            <person name="Liou S.-R."/>
            <person name="Boutin A."/>
            <person name="Hackett J."/>
            <person name="Stroud D."/>
            <person name="Mayhew G.F."/>
            <person name="Rose D.J."/>
            <person name="Zhou S."/>
            <person name="Schwartz D.C."/>
            <person name="Perna N.T."/>
            <person name="Mobley H.L.T."/>
            <person name="Donnenberg M.S."/>
            <person name="Blattner F.R."/>
        </authorList>
    </citation>
    <scope>NUCLEOTIDE SEQUENCE [LARGE SCALE GENOMIC DNA]</scope>
    <source>
        <strain>CFT073 / ATCC 700928 / UPEC</strain>
    </source>
</reference>
<sequence length="102" mass="10531">MKKVLALVVAAAMGLSSAAFAAETATTPAPTATTTKAAPAKTTHHKKQHKAAPAQKAQAAKKHHKNAKAEQKAPEQKAQAAKKHAKKHSHQQPAKPAAQPAA</sequence>
<dbReference type="EMBL" id="AE014075">
    <property type="protein sequence ID" value="AAN80448.1"/>
    <property type="molecule type" value="Genomic_DNA"/>
</dbReference>
<dbReference type="RefSeq" id="WP_001362115.1">
    <property type="nucleotide sequence ID" value="NZ_CP051263.1"/>
</dbReference>
<dbReference type="STRING" id="199310.c1988"/>
<dbReference type="KEGG" id="ecc:c1988"/>
<dbReference type="eggNOG" id="ENOG5032U9T">
    <property type="taxonomic scope" value="Bacteria"/>
</dbReference>
<dbReference type="HOGENOM" id="CLU_102486_2_0_6"/>
<dbReference type="Proteomes" id="UP000001410">
    <property type="component" value="Chromosome"/>
</dbReference>
<dbReference type="GO" id="GO:0042597">
    <property type="term" value="C:periplasmic space"/>
    <property type="evidence" value="ECO:0007669"/>
    <property type="project" value="UniProtKB-SubCell"/>
</dbReference>
<dbReference type="HAMAP" id="MF_00546">
    <property type="entry name" value="Asr"/>
    <property type="match status" value="1"/>
</dbReference>
<dbReference type="InterPro" id="IPR023497">
    <property type="entry name" value="Acid_shock"/>
</dbReference>
<dbReference type="NCBIfam" id="NF033636">
    <property type="entry name" value="acid_shock_Asr"/>
    <property type="match status" value="1"/>
</dbReference>
<dbReference type="Pfam" id="PF06392">
    <property type="entry name" value="Asr"/>
    <property type="match status" value="1"/>
</dbReference>